<reference key="1">
    <citation type="submission" date="2007-08" db="EMBL/GenBank/DDBJ databases">
        <authorList>
            <consortium name="The Citrobacter koseri Genome Sequencing Project"/>
            <person name="McClelland M."/>
            <person name="Sanderson E.K."/>
            <person name="Porwollik S."/>
            <person name="Spieth J."/>
            <person name="Clifton W.S."/>
            <person name="Latreille P."/>
            <person name="Courtney L."/>
            <person name="Wang C."/>
            <person name="Pepin K."/>
            <person name="Bhonagiri V."/>
            <person name="Nash W."/>
            <person name="Johnson M."/>
            <person name="Thiruvilangam P."/>
            <person name="Wilson R."/>
        </authorList>
    </citation>
    <scope>NUCLEOTIDE SEQUENCE [LARGE SCALE GENOMIC DNA]</scope>
    <source>
        <strain>ATCC BAA-895 / CDC 4225-83 / SGSC4696</strain>
    </source>
</reference>
<sequence length="224" mass="25423">MTDARQRLRLMQLASSSLPVGSFTWSQGLEWAVEIGWVKNAEDFAHWQTQQLEQNFFTVDLPIFARLYHACERNDVTAARRWSAYLLACRETRELREEERSRGAAFTRLVVDWVPDCPQTWRPLFANSQLCGMAWLGVRWRIPLTDLALSLGYSWLESAVMAGVKLVPFGQQAAQQLILSLCDHYAQGMAQALARPDADLGSSTPLAAIASARHETQYCRLFRS</sequence>
<evidence type="ECO:0000255" key="1">
    <source>
        <dbReference type="HAMAP-Rule" id="MF_01385"/>
    </source>
</evidence>
<organism>
    <name type="scientific">Citrobacter koseri (strain ATCC BAA-895 / CDC 4225-83 / SGSC4696)</name>
    <dbReference type="NCBI Taxonomy" id="290338"/>
    <lineage>
        <taxon>Bacteria</taxon>
        <taxon>Pseudomonadati</taxon>
        <taxon>Pseudomonadota</taxon>
        <taxon>Gammaproteobacteria</taxon>
        <taxon>Enterobacterales</taxon>
        <taxon>Enterobacteriaceae</taxon>
        <taxon>Citrobacter</taxon>
    </lineage>
</organism>
<protein>
    <recommendedName>
        <fullName evidence="1">Urease accessory protein UreF</fullName>
    </recommendedName>
</protein>
<proteinExistence type="inferred from homology"/>
<feature type="chain" id="PRO_0000344113" description="Urease accessory protein UreF">
    <location>
        <begin position="1"/>
        <end position="224"/>
    </location>
</feature>
<accession>A8APV2</accession>
<dbReference type="EMBL" id="CP000822">
    <property type="protein sequence ID" value="ABV15515.1"/>
    <property type="molecule type" value="Genomic_DNA"/>
</dbReference>
<dbReference type="RefSeq" id="WP_012135198.1">
    <property type="nucleotide sequence ID" value="NC_009792.1"/>
</dbReference>
<dbReference type="SMR" id="A8APV2"/>
<dbReference type="STRING" id="290338.CKO_04459"/>
<dbReference type="GeneID" id="45138028"/>
<dbReference type="KEGG" id="cko:CKO_04459"/>
<dbReference type="HOGENOM" id="CLU_049215_2_1_6"/>
<dbReference type="OrthoDB" id="9798772at2"/>
<dbReference type="Proteomes" id="UP000008148">
    <property type="component" value="Chromosome"/>
</dbReference>
<dbReference type="GO" id="GO:0005737">
    <property type="term" value="C:cytoplasm"/>
    <property type="evidence" value="ECO:0007669"/>
    <property type="project" value="UniProtKB-SubCell"/>
</dbReference>
<dbReference type="GO" id="GO:0016151">
    <property type="term" value="F:nickel cation binding"/>
    <property type="evidence" value="ECO:0007669"/>
    <property type="project" value="UniProtKB-UniRule"/>
</dbReference>
<dbReference type="Gene3D" id="1.10.4190.10">
    <property type="entry name" value="Urease accessory protein UreF"/>
    <property type="match status" value="1"/>
</dbReference>
<dbReference type="HAMAP" id="MF_01385">
    <property type="entry name" value="UreF"/>
    <property type="match status" value="1"/>
</dbReference>
<dbReference type="InterPro" id="IPR002639">
    <property type="entry name" value="UreF"/>
</dbReference>
<dbReference type="InterPro" id="IPR038277">
    <property type="entry name" value="UreF_sf"/>
</dbReference>
<dbReference type="PANTHER" id="PTHR33620">
    <property type="entry name" value="UREASE ACCESSORY PROTEIN F"/>
    <property type="match status" value="1"/>
</dbReference>
<dbReference type="PANTHER" id="PTHR33620:SF1">
    <property type="entry name" value="UREASE ACCESSORY PROTEIN F"/>
    <property type="match status" value="1"/>
</dbReference>
<dbReference type="Pfam" id="PF01730">
    <property type="entry name" value="UreF"/>
    <property type="match status" value="1"/>
</dbReference>
<dbReference type="PIRSF" id="PIRSF009467">
    <property type="entry name" value="Ureas_acces_UreF"/>
    <property type="match status" value="1"/>
</dbReference>
<gene>
    <name evidence="1" type="primary">ureF</name>
    <name type="ordered locus">CKO_04459</name>
</gene>
<comment type="function">
    <text evidence="1">Required for maturation of urease via the functional incorporation of the urease nickel metallocenter.</text>
</comment>
<comment type="subunit">
    <text evidence="1">UreD, UreF and UreG form a complex that acts as a GTP-hydrolysis-dependent molecular chaperone, activating the urease apoprotein by helping to assemble the nickel containing metallocenter of UreC. The UreE protein probably delivers the nickel.</text>
</comment>
<comment type="subcellular location">
    <subcellularLocation>
        <location evidence="1">Cytoplasm</location>
    </subcellularLocation>
</comment>
<comment type="similarity">
    <text evidence="1">Belongs to the UreF family.</text>
</comment>
<keyword id="KW-0143">Chaperone</keyword>
<keyword id="KW-0963">Cytoplasm</keyword>
<keyword id="KW-0996">Nickel insertion</keyword>
<keyword id="KW-1185">Reference proteome</keyword>
<name>UREF_CITK8</name>